<dbReference type="EMBL" id="CP000038">
    <property type="protein sequence ID" value="AAZ89132.1"/>
    <property type="molecule type" value="Genomic_DNA"/>
</dbReference>
<dbReference type="RefSeq" id="WP_005136557.1">
    <property type="nucleotide sequence ID" value="NC_007384.1"/>
</dbReference>
<dbReference type="SMR" id="Q3YZD0"/>
<dbReference type="GeneID" id="93774719"/>
<dbReference type="KEGG" id="ssn:SSON_2501"/>
<dbReference type="HOGENOM" id="CLU_030174_1_0_6"/>
<dbReference type="Proteomes" id="UP000002529">
    <property type="component" value="Chromosome"/>
</dbReference>
<dbReference type="GO" id="GO:0032153">
    <property type="term" value="C:cell division site"/>
    <property type="evidence" value="ECO:0007669"/>
    <property type="project" value="UniProtKB-UniRule"/>
</dbReference>
<dbReference type="GO" id="GO:0005886">
    <property type="term" value="C:plasma membrane"/>
    <property type="evidence" value="ECO:0007669"/>
    <property type="project" value="UniProtKB-SubCell"/>
</dbReference>
<dbReference type="GO" id="GO:0000917">
    <property type="term" value="P:division septum assembly"/>
    <property type="evidence" value="ECO:0007669"/>
    <property type="project" value="TreeGrafter"/>
</dbReference>
<dbReference type="GO" id="GO:0043093">
    <property type="term" value="P:FtsZ-dependent cytokinesis"/>
    <property type="evidence" value="ECO:0007669"/>
    <property type="project" value="UniProtKB-UniRule"/>
</dbReference>
<dbReference type="CDD" id="cd00231">
    <property type="entry name" value="ZipA"/>
    <property type="match status" value="1"/>
</dbReference>
<dbReference type="FunFam" id="3.30.1400.10:FF:000001">
    <property type="entry name" value="Cell division protein ZipA"/>
    <property type="match status" value="1"/>
</dbReference>
<dbReference type="Gene3D" id="3.30.1400.10">
    <property type="entry name" value="ZipA, C-terminal FtsZ-binding domain"/>
    <property type="match status" value="1"/>
</dbReference>
<dbReference type="HAMAP" id="MF_00509">
    <property type="entry name" value="ZipA"/>
    <property type="match status" value="1"/>
</dbReference>
<dbReference type="InterPro" id="IPR011919">
    <property type="entry name" value="Cell_div_ZipA"/>
</dbReference>
<dbReference type="InterPro" id="IPR007449">
    <property type="entry name" value="ZipA_FtsZ-bd_C"/>
</dbReference>
<dbReference type="InterPro" id="IPR036765">
    <property type="entry name" value="ZipA_FtsZ-bd_C_sf"/>
</dbReference>
<dbReference type="NCBIfam" id="TIGR02205">
    <property type="entry name" value="septum_zipA"/>
    <property type="match status" value="1"/>
</dbReference>
<dbReference type="PANTHER" id="PTHR38685">
    <property type="entry name" value="CELL DIVISION PROTEIN ZIPA"/>
    <property type="match status" value="1"/>
</dbReference>
<dbReference type="PANTHER" id="PTHR38685:SF1">
    <property type="entry name" value="CELL DIVISION PROTEIN ZIPA"/>
    <property type="match status" value="1"/>
</dbReference>
<dbReference type="Pfam" id="PF04354">
    <property type="entry name" value="ZipA_C"/>
    <property type="match status" value="1"/>
</dbReference>
<dbReference type="SMART" id="SM00771">
    <property type="entry name" value="ZipA_C"/>
    <property type="match status" value="1"/>
</dbReference>
<dbReference type="SUPFAM" id="SSF64383">
    <property type="entry name" value="Cell-division protein ZipA, C-terminal domain"/>
    <property type="match status" value="1"/>
</dbReference>
<name>ZIPA_SHISS</name>
<keyword id="KW-0131">Cell cycle</keyword>
<keyword id="KW-0132">Cell division</keyword>
<keyword id="KW-0997">Cell inner membrane</keyword>
<keyword id="KW-1003">Cell membrane</keyword>
<keyword id="KW-0472">Membrane</keyword>
<keyword id="KW-1185">Reference proteome</keyword>
<keyword id="KW-0812">Transmembrane</keyword>
<keyword id="KW-1133">Transmembrane helix</keyword>
<feature type="chain" id="PRO_0000237137" description="Cell division protein ZipA">
    <location>
        <begin position="1"/>
        <end position="328"/>
    </location>
</feature>
<feature type="topological domain" description="Periplasmic" evidence="1">
    <location>
        <begin position="1"/>
        <end position="6"/>
    </location>
</feature>
<feature type="transmembrane region" description="Helical" evidence="1">
    <location>
        <begin position="7"/>
        <end position="27"/>
    </location>
</feature>
<feature type="topological domain" description="Cytoplasmic" evidence="1">
    <location>
        <begin position="28"/>
        <end position="328"/>
    </location>
</feature>
<feature type="region of interest" description="Disordered" evidence="2">
    <location>
        <begin position="42"/>
        <end position="186"/>
    </location>
</feature>
<feature type="compositionally biased region" description="Acidic residues" evidence="2">
    <location>
        <begin position="51"/>
        <end position="63"/>
    </location>
</feature>
<feature type="compositionally biased region" description="Low complexity" evidence="2">
    <location>
        <begin position="123"/>
        <end position="171"/>
    </location>
</feature>
<accession>Q3YZD0</accession>
<protein>
    <recommendedName>
        <fullName evidence="1">Cell division protein ZipA</fullName>
    </recommendedName>
</protein>
<reference key="1">
    <citation type="journal article" date="2005" name="Nucleic Acids Res.">
        <title>Genome dynamics and diversity of Shigella species, the etiologic agents of bacillary dysentery.</title>
        <authorList>
            <person name="Yang F."/>
            <person name="Yang J."/>
            <person name="Zhang X."/>
            <person name="Chen L."/>
            <person name="Jiang Y."/>
            <person name="Yan Y."/>
            <person name="Tang X."/>
            <person name="Wang J."/>
            <person name="Xiong Z."/>
            <person name="Dong J."/>
            <person name="Xue Y."/>
            <person name="Zhu Y."/>
            <person name="Xu X."/>
            <person name="Sun L."/>
            <person name="Chen S."/>
            <person name="Nie H."/>
            <person name="Peng J."/>
            <person name="Xu J."/>
            <person name="Wang Y."/>
            <person name="Yuan Z."/>
            <person name="Wen Y."/>
            <person name="Yao Z."/>
            <person name="Shen Y."/>
            <person name="Qiang B."/>
            <person name="Hou Y."/>
            <person name="Yu J."/>
            <person name="Jin Q."/>
        </authorList>
    </citation>
    <scope>NUCLEOTIDE SEQUENCE [LARGE SCALE GENOMIC DNA]</scope>
    <source>
        <strain>Ss046</strain>
    </source>
</reference>
<proteinExistence type="inferred from homology"/>
<organism>
    <name type="scientific">Shigella sonnei (strain Ss046)</name>
    <dbReference type="NCBI Taxonomy" id="300269"/>
    <lineage>
        <taxon>Bacteria</taxon>
        <taxon>Pseudomonadati</taxon>
        <taxon>Pseudomonadota</taxon>
        <taxon>Gammaproteobacteria</taxon>
        <taxon>Enterobacterales</taxon>
        <taxon>Enterobacteriaceae</taxon>
        <taxon>Shigella</taxon>
    </lineage>
</organism>
<gene>
    <name evidence="1" type="primary">zipA</name>
    <name type="ordered locus">SSON_2501</name>
</gene>
<sequence>MMQDLRLILIIVGAIAIIALLVHGFWTSRKERSSMFRDRPLKRMKSKRDDDSYDEDVEDDEGVGEVRVHRVNHAPANAQEHEAARPSPQHQYQPPYASAQPRQPIQQPPEAQVPPQHAPRPAQPMQQPAYQPQPEQPLQQPVSPQVAPAPQPVHSAPQPAQQAFQPAEPVAAPQPEPVAEPAPVMDKPKRKEAVIIMNVAAHHGSELNGELLLNSIQQAGFIFGDMNIYHRHLSPDGSGPALFSLANMVKPGTFDPEMKDFTTPGVTIFMQVPSYGDELQNFKLMLQSAQHIADEVGGVVLDDQRRMMTPQKLREYQDIIREVKDANA</sequence>
<evidence type="ECO:0000255" key="1">
    <source>
        <dbReference type="HAMAP-Rule" id="MF_00509"/>
    </source>
</evidence>
<evidence type="ECO:0000256" key="2">
    <source>
        <dbReference type="SAM" id="MobiDB-lite"/>
    </source>
</evidence>
<comment type="function">
    <text evidence="1">Essential cell division protein that stabilizes the FtsZ protofilaments by cross-linking them and that serves as a cytoplasmic membrane anchor for the Z ring. Also required for the recruitment to the septal ring of downstream cell division proteins.</text>
</comment>
<comment type="subunit">
    <text evidence="1">Interacts with FtsZ via their C-terminal domains.</text>
</comment>
<comment type="subcellular location">
    <subcellularLocation>
        <location evidence="1">Cell inner membrane</location>
        <topology evidence="1">Single-pass type I membrane protein</topology>
    </subcellularLocation>
    <text evidence="1">Localizes to the Z ring in an FtsZ-dependent manner.</text>
</comment>
<comment type="similarity">
    <text evidence="1">Belongs to the ZipA family.</text>
</comment>